<sequence>MQQIPMTVRGAEQLREELDFLKNVRRPEIIKAIAEAREHGDLKENAEYHAAREQQGFCEGRIQEIEGKLGNAQIIDVSKMPNNGKVIFGATVVLVNTNTDEEVTYRIVGDDEADIKSGLISVNSPIARGLIGKELDDTVNITTPGGVVEFDIIEVNYI</sequence>
<feature type="chain" id="PRO_0000176928" description="Transcription elongation factor GreA">
    <location>
        <begin position="1"/>
        <end position="158"/>
    </location>
</feature>
<name>GREA_HAEIN</name>
<organism>
    <name type="scientific">Haemophilus influenzae (strain ATCC 51907 / DSM 11121 / KW20 / Rd)</name>
    <dbReference type="NCBI Taxonomy" id="71421"/>
    <lineage>
        <taxon>Bacteria</taxon>
        <taxon>Pseudomonadati</taxon>
        <taxon>Pseudomonadota</taxon>
        <taxon>Gammaproteobacteria</taxon>
        <taxon>Pasteurellales</taxon>
        <taxon>Pasteurellaceae</taxon>
        <taxon>Haemophilus</taxon>
    </lineage>
</organism>
<comment type="function">
    <text evidence="1">Necessary for efficient RNA polymerase transcription elongation past template-encoded arresting sites. The arresting sites in DNA have the property of trapping a certain fraction of elongating RNA polymerases that pass through, resulting in locked ternary complexes. Cleavage of the nascent transcript by cleavage factors such as GreA or GreB allows the resumption of elongation from the new 3'terminus. GreA releases sequences of 2 to 3 nucleotides (By similarity).</text>
</comment>
<comment type="similarity">
    <text evidence="2">Belongs to the GreA/GreB family.</text>
</comment>
<proteinExistence type="inferred from homology"/>
<protein>
    <recommendedName>
        <fullName>Transcription elongation factor GreA</fullName>
    </recommendedName>
    <alternativeName>
        <fullName>Transcript cleavage factor GreA</fullName>
    </alternativeName>
</protein>
<dbReference type="EMBL" id="L42023">
    <property type="protein sequence ID" value="AAC22976.1"/>
    <property type="molecule type" value="Genomic_DNA"/>
</dbReference>
<dbReference type="PIR" id="B64117">
    <property type="entry name" value="B64117"/>
</dbReference>
<dbReference type="RefSeq" id="NP_439483.1">
    <property type="nucleotide sequence ID" value="NC_000907.1"/>
</dbReference>
<dbReference type="SMR" id="P43881"/>
<dbReference type="STRING" id="71421.HI_1331"/>
<dbReference type="EnsemblBacteria" id="AAC22976">
    <property type="protein sequence ID" value="AAC22976"/>
    <property type="gene ID" value="HI_1331"/>
</dbReference>
<dbReference type="KEGG" id="hin:HI_1331"/>
<dbReference type="PATRIC" id="fig|71421.8.peg.1384"/>
<dbReference type="eggNOG" id="COG0782">
    <property type="taxonomic scope" value="Bacteria"/>
</dbReference>
<dbReference type="HOGENOM" id="CLU_101379_2_0_6"/>
<dbReference type="OrthoDB" id="9808774at2"/>
<dbReference type="PhylomeDB" id="P43881"/>
<dbReference type="BioCyc" id="HINF71421:G1GJ1-1356-MONOMER"/>
<dbReference type="Proteomes" id="UP000000579">
    <property type="component" value="Chromosome"/>
</dbReference>
<dbReference type="GO" id="GO:0003677">
    <property type="term" value="F:DNA binding"/>
    <property type="evidence" value="ECO:0007669"/>
    <property type="project" value="UniProtKB-UniRule"/>
</dbReference>
<dbReference type="GO" id="GO:0070063">
    <property type="term" value="F:RNA polymerase binding"/>
    <property type="evidence" value="ECO:0007669"/>
    <property type="project" value="InterPro"/>
</dbReference>
<dbReference type="GO" id="GO:0006354">
    <property type="term" value="P:DNA-templated transcription elongation"/>
    <property type="evidence" value="ECO:0000318"/>
    <property type="project" value="GO_Central"/>
</dbReference>
<dbReference type="GO" id="GO:0032784">
    <property type="term" value="P:regulation of DNA-templated transcription elongation"/>
    <property type="evidence" value="ECO:0007669"/>
    <property type="project" value="UniProtKB-UniRule"/>
</dbReference>
<dbReference type="FunFam" id="1.10.287.180:FF:000001">
    <property type="entry name" value="Transcription elongation factor GreA"/>
    <property type="match status" value="1"/>
</dbReference>
<dbReference type="FunFam" id="3.10.50.30:FF:000001">
    <property type="entry name" value="Transcription elongation factor GreA"/>
    <property type="match status" value="1"/>
</dbReference>
<dbReference type="Gene3D" id="3.10.50.30">
    <property type="entry name" value="Transcription elongation factor, GreA/GreB, C-terminal domain"/>
    <property type="match status" value="1"/>
</dbReference>
<dbReference type="Gene3D" id="1.10.287.180">
    <property type="entry name" value="Transcription elongation factor, GreA/GreB, N-terminal domain"/>
    <property type="match status" value="1"/>
</dbReference>
<dbReference type="HAMAP" id="MF_00105">
    <property type="entry name" value="GreA_GreB"/>
    <property type="match status" value="1"/>
</dbReference>
<dbReference type="InterPro" id="IPR036953">
    <property type="entry name" value="GreA/GreB_C_sf"/>
</dbReference>
<dbReference type="InterPro" id="IPR018151">
    <property type="entry name" value="TF_GreA/GreB_CS"/>
</dbReference>
<dbReference type="InterPro" id="IPR006359">
    <property type="entry name" value="Tscrpt_elong_fac_GreA"/>
</dbReference>
<dbReference type="InterPro" id="IPR028624">
    <property type="entry name" value="Tscrpt_elong_fac_GreA/B"/>
</dbReference>
<dbReference type="InterPro" id="IPR001437">
    <property type="entry name" value="Tscrpt_elong_fac_GreA/B_C"/>
</dbReference>
<dbReference type="InterPro" id="IPR023459">
    <property type="entry name" value="Tscrpt_elong_fac_GreA/B_fam"/>
</dbReference>
<dbReference type="InterPro" id="IPR022691">
    <property type="entry name" value="Tscrpt_elong_fac_GreA/B_N"/>
</dbReference>
<dbReference type="InterPro" id="IPR036805">
    <property type="entry name" value="Tscrpt_elong_fac_GreA/B_N_sf"/>
</dbReference>
<dbReference type="NCBIfam" id="TIGR01462">
    <property type="entry name" value="greA"/>
    <property type="match status" value="1"/>
</dbReference>
<dbReference type="NCBIfam" id="NF001261">
    <property type="entry name" value="PRK00226.1-2"/>
    <property type="match status" value="1"/>
</dbReference>
<dbReference type="NCBIfam" id="NF001263">
    <property type="entry name" value="PRK00226.1-4"/>
    <property type="match status" value="1"/>
</dbReference>
<dbReference type="NCBIfam" id="NF001264">
    <property type="entry name" value="PRK00226.1-5"/>
    <property type="match status" value="1"/>
</dbReference>
<dbReference type="PANTHER" id="PTHR30437">
    <property type="entry name" value="TRANSCRIPTION ELONGATION FACTOR GREA"/>
    <property type="match status" value="1"/>
</dbReference>
<dbReference type="PANTHER" id="PTHR30437:SF4">
    <property type="entry name" value="TRANSCRIPTION ELONGATION FACTOR GREA"/>
    <property type="match status" value="1"/>
</dbReference>
<dbReference type="Pfam" id="PF01272">
    <property type="entry name" value="GreA_GreB"/>
    <property type="match status" value="1"/>
</dbReference>
<dbReference type="Pfam" id="PF03449">
    <property type="entry name" value="GreA_GreB_N"/>
    <property type="match status" value="1"/>
</dbReference>
<dbReference type="PIRSF" id="PIRSF006092">
    <property type="entry name" value="GreA_GreB"/>
    <property type="match status" value="1"/>
</dbReference>
<dbReference type="SUPFAM" id="SSF54534">
    <property type="entry name" value="FKBP-like"/>
    <property type="match status" value="1"/>
</dbReference>
<dbReference type="SUPFAM" id="SSF46557">
    <property type="entry name" value="GreA transcript cleavage protein, N-terminal domain"/>
    <property type="match status" value="1"/>
</dbReference>
<dbReference type="PROSITE" id="PS00829">
    <property type="entry name" value="GREAB_1"/>
    <property type="match status" value="1"/>
</dbReference>
<dbReference type="PROSITE" id="PS00830">
    <property type="entry name" value="GREAB_2"/>
    <property type="match status" value="1"/>
</dbReference>
<gene>
    <name type="primary">greA</name>
    <name type="ordered locus">HI_1331</name>
</gene>
<accession>P43881</accession>
<reference key="1">
    <citation type="journal article" date="1995" name="Science">
        <title>Whole-genome random sequencing and assembly of Haemophilus influenzae Rd.</title>
        <authorList>
            <person name="Fleischmann R.D."/>
            <person name="Adams M.D."/>
            <person name="White O."/>
            <person name="Clayton R.A."/>
            <person name="Kirkness E.F."/>
            <person name="Kerlavage A.R."/>
            <person name="Bult C.J."/>
            <person name="Tomb J.-F."/>
            <person name="Dougherty B.A."/>
            <person name="Merrick J.M."/>
            <person name="McKenney K."/>
            <person name="Sutton G.G."/>
            <person name="FitzHugh W."/>
            <person name="Fields C.A."/>
            <person name="Gocayne J.D."/>
            <person name="Scott J.D."/>
            <person name="Shirley R."/>
            <person name="Liu L.-I."/>
            <person name="Glodek A."/>
            <person name="Kelley J.M."/>
            <person name="Weidman J.F."/>
            <person name="Phillips C.A."/>
            <person name="Spriggs T."/>
            <person name="Hedblom E."/>
            <person name="Cotton M.D."/>
            <person name="Utterback T.R."/>
            <person name="Hanna M.C."/>
            <person name="Nguyen D.T."/>
            <person name="Saudek D.M."/>
            <person name="Brandon R.C."/>
            <person name="Fine L.D."/>
            <person name="Fritchman J.L."/>
            <person name="Fuhrmann J.L."/>
            <person name="Geoghagen N.S.M."/>
            <person name="Gnehm C.L."/>
            <person name="McDonald L.A."/>
            <person name="Small K.V."/>
            <person name="Fraser C.M."/>
            <person name="Smith H.O."/>
            <person name="Venter J.C."/>
        </authorList>
    </citation>
    <scope>NUCLEOTIDE SEQUENCE [LARGE SCALE GENOMIC DNA]</scope>
    <source>
        <strain>ATCC 51907 / DSM 11121 / KW20 / Rd</strain>
    </source>
</reference>
<evidence type="ECO:0000250" key="1"/>
<evidence type="ECO:0000305" key="2"/>
<keyword id="KW-0238">DNA-binding</keyword>
<keyword id="KW-1185">Reference proteome</keyword>
<keyword id="KW-0804">Transcription</keyword>
<keyword id="KW-0805">Transcription regulation</keyword>